<gene>
    <name evidence="1" type="primary">gatZ</name>
    <name type="ordered locus">ECUMN_2427</name>
</gene>
<protein>
    <recommendedName>
        <fullName evidence="1">D-tagatose-1,6-bisphosphate aldolase subunit GatZ</fullName>
    </recommendedName>
</protein>
<accession>B7NCC5</accession>
<evidence type="ECO:0000255" key="1">
    <source>
        <dbReference type="HAMAP-Rule" id="MF_01296"/>
    </source>
</evidence>
<sequence>MKTLIARHKAGEHIGICSVCSAHPLVIEAALAFDRNSTRKVLIEATSNQVNQFGGYTCMTPADFREFVFAIADRVGFARERIILGGDHLGPNCWQQENADAAMEKSVELVKAYVRAGFSKIHLDASMSCAGDPIPLAPETVAERAAVLCFAAESVATDCQREQLSYVIGTEVPVPGGEASAIQSVHITHVEDAANTLRTHQKAFIARGLAEALTRVIAIVVQPGVEFDHSNIIHYQPQEAQPLAQWIENTRMVYEAHSTDYQTRTAYWELVRDHFAILKVGPALTFALREAIFALAQIEQELIAPENRSGCLAVIEEVMLDEPQYWKKYYRPGFNDSLLDIRYSLSDRIRYYWPHSRIKNSVETMMVNLEGMEIPLGMISQYLPKQFERIQSGELSAIPHQLIMDKIYDVLRAYRYGCAE</sequence>
<feature type="chain" id="PRO_0000372498" description="D-tagatose-1,6-bisphosphate aldolase subunit GatZ">
    <location>
        <begin position="1"/>
        <end position="420"/>
    </location>
</feature>
<dbReference type="EMBL" id="CU928163">
    <property type="protein sequence ID" value="CAR13615.1"/>
    <property type="molecule type" value="Genomic_DNA"/>
</dbReference>
<dbReference type="RefSeq" id="WP_000853830.1">
    <property type="nucleotide sequence ID" value="NC_011751.1"/>
</dbReference>
<dbReference type="RefSeq" id="YP_002413143.1">
    <property type="nucleotide sequence ID" value="NC_011751.1"/>
</dbReference>
<dbReference type="SMR" id="B7NCC5"/>
<dbReference type="STRING" id="585056.ECUMN_2427"/>
<dbReference type="KEGG" id="eum:ECUMN_2427"/>
<dbReference type="PATRIC" id="fig|585056.7.peg.2608"/>
<dbReference type="HOGENOM" id="CLU_053334_0_0_6"/>
<dbReference type="UniPathway" id="UPA00704">
    <property type="reaction ID" value="UER00716"/>
</dbReference>
<dbReference type="Proteomes" id="UP000007097">
    <property type="component" value="Chromosome"/>
</dbReference>
<dbReference type="GO" id="GO:0005886">
    <property type="term" value="C:plasma membrane"/>
    <property type="evidence" value="ECO:0007669"/>
    <property type="project" value="TreeGrafter"/>
</dbReference>
<dbReference type="GO" id="GO:2001059">
    <property type="term" value="P:D-tagatose 6-phosphate catabolic process"/>
    <property type="evidence" value="ECO:0007669"/>
    <property type="project" value="UniProtKB-UniRule"/>
</dbReference>
<dbReference type="GO" id="GO:0019402">
    <property type="term" value="P:galactitol metabolic process"/>
    <property type="evidence" value="ECO:0007669"/>
    <property type="project" value="UniProtKB-KW"/>
</dbReference>
<dbReference type="GO" id="GO:0009401">
    <property type="term" value="P:phosphoenolpyruvate-dependent sugar phosphotransferase system"/>
    <property type="evidence" value="ECO:0007669"/>
    <property type="project" value="TreeGrafter"/>
</dbReference>
<dbReference type="FunFam" id="3.20.20.70:FF:000141">
    <property type="entry name" value="D-tagatose-1,6-bisphosphate aldolase subunit GatZ"/>
    <property type="match status" value="1"/>
</dbReference>
<dbReference type="Gene3D" id="3.20.20.70">
    <property type="entry name" value="Aldolase class I"/>
    <property type="match status" value="1"/>
</dbReference>
<dbReference type="Gene3D" id="1.10.400.20">
    <property type="entry name" value="putative tagatose 6-phosphate kinase domain like"/>
    <property type="match status" value="1"/>
</dbReference>
<dbReference type="HAMAP" id="MF_01296">
    <property type="entry name" value="Tagatose_aldol_GatZ"/>
    <property type="match status" value="1"/>
</dbReference>
<dbReference type="InterPro" id="IPR013785">
    <property type="entry name" value="Aldolase_TIM"/>
</dbReference>
<dbReference type="InterPro" id="IPR012062">
    <property type="entry name" value="GatZ/KbaZ-like"/>
</dbReference>
<dbReference type="InterPro" id="IPR050303">
    <property type="entry name" value="GatZ_KbaZ_carbometab"/>
</dbReference>
<dbReference type="InterPro" id="IPR023436">
    <property type="entry name" value="TagBP_ald_GatZ"/>
</dbReference>
<dbReference type="NCBIfam" id="TIGR02810">
    <property type="entry name" value="agaZ_gatZ"/>
    <property type="match status" value="1"/>
</dbReference>
<dbReference type="NCBIfam" id="NF011626">
    <property type="entry name" value="PRK15052.1"/>
    <property type="match status" value="1"/>
</dbReference>
<dbReference type="PANTHER" id="PTHR32502:SF12">
    <property type="entry name" value="D-TAGATOSE-1,6-BISPHOSPHATE ALDOLASE SUBUNIT GATZ"/>
    <property type="match status" value="1"/>
</dbReference>
<dbReference type="PANTHER" id="PTHR32502">
    <property type="entry name" value="N-ACETYLGALACTOSAMINE PERMEASE II COMPONENT-RELATED"/>
    <property type="match status" value="1"/>
</dbReference>
<dbReference type="Pfam" id="PF08013">
    <property type="entry name" value="GatZ_KbaZ-like"/>
    <property type="match status" value="1"/>
</dbReference>
<dbReference type="PIRSF" id="PIRSF009264">
    <property type="entry name" value="TagBP_ald_AgaZ"/>
    <property type="match status" value="1"/>
</dbReference>
<dbReference type="SUPFAM" id="SSF51569">
    <property type="entry name" value="Aldolase"/>
    <property type="match status" value="1"/>
</dbReference>
<comment type="function">
    <text evidence="1">Component of the tagatose-1,6-bisphosphate aldolase GatYZ that is required for full activity and stability of the Y subunit. Could have a chaperone-like function for the proper and stable folding of GatY. When expressed alone, GatZ does not show any aldolase activity. Is involved in the catabolism of galactitol.</text>
</comment>
<comment type="pathway">
    <text evidence="1">Carbohydrate metabolism; D-tagatose 6-phosphate degradation; D-glyceraldehyde 3-phosphate and glycerone phosphate from D-tagatose 6-phosphate: step 2/2.</text>
</comment>
<comment type="subunit">
    <text evidence="1">Forms a complex with GatY.</text>
</comment>
<comment type="similarity">
    <text evidence="1">Belongs to the GatZ/KbaZ family. GatZ subfamily.</text>
</comment>
<name>GATZ_ECOLU</name>
<keyword id="KW-0298">Galactitol metabolism</keyword>
<organism>
    <name type="scientific">Escherichia coli O17:K52:H18 (strain UMN026 / ExPEC)</name>
    <dbReference type="NCBI Taxonomy" id="585056"/>
    <lineage>
        <taxon>Bacteria</taxon>
        <taxon>Pseudomonadati</taxon>
        <taxon>Pseudomonadota</taxon>
        <taxon>Gammaproteobacteria</taxon>
        <taxon>Enterobacterales</taxon>
        <taxon>Enterobacteriaceae</taxon>
        <taxon>Escherichia</taxon>
    </lineage>
</organism>
<reference key="1">
    <citation type="journal article" date="2009" name="PLoS Genet.">
        <title>Organised genome dynamics in the Escherichia coli species results in highly diverse adaptive paths.</title>
        <authorList>
            <person name="Touchon M."/>
            <person name="Hoede C."/>
            <person name="Tenaillon O."/>
            <person name="Barbe V."/>
            <person name="Baeriswyl S."/>
            <person name="Bidet P."/>
            <person name="Bingen E."/>
            <person name="Bonacorsi S."/>
            <person name="Bouchier C."/>
            <person name="Bouvet O."/>
            <person name="Calteau A."/>
            <person name="Chiapello H."/>
            <person name="Clermont O."/>
            <person name="Cruveiller S."/>
            <person name="Danchin A."/>
            <person name="Diard M."/>
            <person name="Dossat C."/>
            <person name="Karoui M.E."/>
            <person name="Frapy E."/>
            <person name="Garry L."/>
            <person name="Ghigo J.M."/>
            <person name="Gilles A.M."/>
            <person name="Johnson J."/>
            <person name="Le Bouguenec C."/>
            <person name="Lescat M."/>
            <person name="Mangenot S."/>
            <person name="Martinez-Jehanne V."/>
            <person name="Matic I."/>
            <person name="Nassif X."/>
            <person name="Oztas S."/>
            <person name="Petit M.A."/>
            <person name="Pichon C."/>
            <person name="Rouy Z."/>
            <person name="Ruf C.S."/>
            <person name="Schneider D."/>
            <person name="Tourret J."/>
            <person name="Vacherie B."/>
            <person name="Vallenet D."/>
            <person name="Medigue C."/>
            <person name="Rocha E.P.C."/>
            <person name="Denamur E."/>
        </authorList>
    </citation>
    <scope>NUCLEOTIDE SEQUENCE [LARGE SCALE GENOMIC DNA]</scope>
    <source>
        <strain>UMN026 / ExPEC</strain>
    </source>
</reference>
<proteinExistence type="inferred from homology"/>